<organism>
    <name type="scientific">Mycobacterium tuberculosis (strain CDC 1551 / Oshkosh)</name>
    <dbReference type="NCBI Taxonomy" id="83331"/>
    <lineage>
        <taxon>Bacteria</taxon>
        <taxon>Bacillati</taxon>
        <taxon>Actinomycetota</taxon>
        <taxon>Actinomycetes</taxon>
        <taxon>Mycobacteriales</taxon>
        <taxon>Mycobacteriaceae</taxon>
        <taxon>Mycobacterium</taxon>
        <taxon>Mycobacterium tuberculosis complex</taxon>
    </lineage>
</organism>
<proteinExistence type="predicted"/>
<dbReference type="EMBL" id="AE000516">
    <property type="protein sequence ID" value="AAK44752.1"/>
    <property type="molecule type" value="Genomic_DNA"/>
</dbReference>
<dbReference type="PIR" id="G70746">
    <property type="entry name" value="G70746"/>
</dbReference>
<dbReference type="RefSeq" id="WP_003402695.1">
    <property type="nucleotide sequence ID" value="NZ_KK341227.1"/>
</dbReference>
<dbReference type="SMR" id="P9WKS8"/>
<dbReference type="KEGG" id="mtc:MT0529"/>
<dbReference type="PATRIC" id="fig|83331.31.peg.561"/>
<dbReference type="HOGENOM" id="CLU_125054_2_1_11"/>
<dbReference type="Proteomes" id="UP000001020">
    <property type="component" value="Chromosome"/>
</dbReference>
<dbReference type="Gene3D" id="3.40.30.10">
    <property type="entry name" value="Glutaredoxin"/>
    <property type="match status" value="1"/>
</dbReference>
<dbReference type="InterPro" id="IPR008554">
    <property type="entry name" value="Glutaredoxin-like"/>
</dbReference>
<dbReference type="InterPro" id="IPR036249">
    <property type="entry name" value="Thioredoxin-like_sf"/>
</dbReference>
<dbReference type="Pfam" id="PF05768">
    <property type="entry name" value="Glrx-like"/>
    <property type="match status" value="1"/>
</dbReference>
<dbReference type="SUPFAM" id="SSF52833">
    <property type="entry name" value="Thioredoxin-like"/>
    <property type="match status" value="1"/>
</dbReference>
<reference key="1">
    <citation type="journal article" date="2002" name="J. Bacteriol.">
        <title>Whole-genome comparison of Mycobacterium tuberculosis clinical and laboratory strains.</title>
        <authorList>
            <person name="Fleischmann R.D."/>
            <person name="Alland D."/>
            <person name="Eisen J.A."/>
            <person name="Carpenter L."/>
            <person name="White O."/>
            <person name="Peterson J.D."/>
            <person name="DeBoy R.T."/>
            <person name="Dodson R.J."/>
            <person name="Gwinn M.L."/>
            <person name="Haft D.H."/>
            <person name="Hickey E.K."/>
            <person name="Kolonay J.F."/>
            <person name="Nelson W.C."/>
            <person name="Umayam L.A."/>
            <person name="Ermolaeva M.D."/>
            <person name="Salzberg S.L."/>
            <person name="Delcher A."/>
            <person name="Utterback T.R."/>
            <person name="Weidman J.F."/>
            <person name="Khouri H.M."/>
            <person name="Gill J."/>
            <person name="Mikula A."/>
            <person name="Bishai W."/>
            <person name="Jacobs W.R. Jr."/>
            <person name="Venter J.C."/>
            <person name="Fraser C.M."/>
        </authorList>
    </citation>
    <scope>NUCLEOTIDE SEQUENCE [LARGE SCALE GENOMIC DNA]</scope>
    <source>
        <strain>CDC 1551 / Oshkosh</strain>
    </source>
</reference>
<sequence length="97" mass="10710">MSRPQVELLTRAGCAICVRVAEQLAELSSELGFDMMTIDVDVAASTGNPGLRAEFGDRLPVVLLDGREHSYWEVDEHRLRADIARSTFGSPPDKRLP</sequence>
<protein>
    <recommendedName>
        <fullName>Uncharacterized protein MT0529</fullName>
    </recommendedName>
</protein>
<keyword id="KW-1185">Reference proteome</keyword>
<gene>
    <name type="ordered locus">MT0529</name>
</gene>
<name>Y508_MYCTO</name>
<accession>P9WKS8</accession>
<accession>L0T3U5</accession>
<accession>P64727</accession>
<accession>Q11172</accession>
<feature type="chain" id="PRO_0000427601" description="Uncharacterized protein MT0529">
    <location>
        <begin position="1"/>
        <end position="97"/>
    </location>
</feature>